<keyword id="KW-0687">Ribonucleoprotein</keyword>
<keyword id="KW-0689">Ribosomal protein</keyword>
<proteinExistence type="inferred from homology"/>
<comment type="similarity">
    <text evidence="1">Belongs to the bacterial ribosomal protein bL32 family.</text>
</comment>
<sequence>MAVPARRTSKAKKNKRRTHYKVTAPSVNFDETTGDYSRSHRVSLKGYYKGRKIAKAASAE</sequence>
<dbReference type="EMBL" id="CP001033">
    <property type="protein sequence ID" value="ACB91355.1"/>
    <property type="molecule type" value="Genomic_DNA"/>
</dbReference>
<dbReference type="RefSeq" id="WP_000290417.1">
    <property type="nucleotide sequence ID" value="NC_010582.1"/>
</dbReference>
<dbReference type="SMR" id="B2IN60"/>
<dbReference type="GeneID" id="49598937"/>
<dbReference type="KEGG" id="spw:SPCG_2103"/>
<dbReference type="HOGENOM" id="CLU_129084_2_3_9"/>
<dbReference type="GO" id="GO:0015934">
    <property type="term" value="C:large ribosomal subunit"/>
    <property type="evidence" value="ECO:0007669"/>
    <property type="project" value="InterPro"/>
</dbReference>
<dbReference type="GO" id="GO:0003735">
    <property type="term" value="F:structural constituent of ribosome"/>
    <property type="evidence" value="ECO:0007669"/>
    <property type="project" value="InterPro"/>
</dbReference>
<dbReference type="GO" id="GO:0006412">
    <property type="term" value="P:translation"/>
    <property type="evidence" value="ECO:0007669"/>
    <property type="project" value="UniProtKB-UniRule"/>
</dbReference>
<dbReference type="HAMAP" id="MF_00340">
    <property type="entry name" value="Ribosomal_bL32"/>
    <property type="match status" value="1"/>
</dbReference>
<dbReference type="InterPro" id="IPR002677">
    <property type="entry name" value="Ribosomal_bL32"/>
</dbReference>
<dbReference type="InterPro" id="IPR044957">
    <property type="entry name" value="Ribosomal_bL32_bact"/>
</dbReference>
<dbReference type="InterPro" id="IPR011332">
    <property type="entry name" value="Ribosomal_zn-bd"/>
</dbReference>
<dbReference type="NCBIfam" id="TIGR01031">
    <property type="entry name" value="rpmF_bact"/>
    <property type="match status" value="1"/>
</dbReference>
<dbReference type="PANTHER" id="PTHR35534">
    <property type="entry name" value="50S RIBOSOMAL PROTEIN L32"/>
    <property type="match status" value="1"/>
</dbReference>
<dbReference type="PANTHER" id="PTHR35534:SF1">
    <property type="entry name" value="LARGE RIBOSOMAL SUBUNIT PROTEIN BL32"/>
    <property type="match status" value="1"/>
</dbReference>
<dbReference type="Pfam" id="PF01783">
    <property type="entry name" value="Ribosomal_L32p"/>
    <property type="match status" value="1"/>
</dbReference>
<dbReference type="SUPFAM" id="SSF57829">
    <property type="entry name" value="Zn-binding ribosomal proteins"/>
    <property type="match status" value="1"/>
</dbReference>
<feature type="chain" id="PRO_1000120180" description="Large ribosomal subunit protein bL32">
    <location>
        <begin position="1"/>
        <end position="60"/>
    </location>
</feature>
<evidence type="ECO:0000255" key="1">
    <source>
        <dbReference type="HAMAP-Rule" id="MF_00340"/>
    </source>
</evidence>
<evidence type="ECO:0000305" key="2"/>
<organism>
    <name type="scientific">Streptococcus pneumoniae (strain CGSP14)</name>
    <dbReference type="NCBI Taxonomy" id="516950"/>
    <lineage>
        <taxon>Bacteria</taxon>
        <taxon>Bacillati</taxon>
        <taxon>Bacillota</taxon>
        <taxon>Bacilli</taxon>
        <taxon>Lactobacillales</taxon>
        <taxon>Streptococcaceae</taxon>
        <taxon>Streptococcus</taxon>
    </lineage>
</organism>
<accession>B2IN60</accession>
<gene>
    <name evidence="1" type="primary">rpmF</name>
    <name type="ordered locus">SPCG_2103</name>
</gene>
<protein>
    <recommendedName>
        <fullName evidence="1">Large ribosomal subunit protein bL32</fullName>
    </recommendedName>
    <alternativeName>
        <fullName evidence="2">50S ribosomal protein L32</fullName>
    </alternativeName>
</protein>
<reference key="1">
    <citation type="journal article" date="2009" name="BMC Genomics">
        <title>Genome evolution driven by host adaptations results in a more virulent and antimicrobial-resistant Streptococcus pneumoniae serotype 14.</title>
        <authorList>
            <person name="Ding F."/>
            <person name="Tang P."/>
            <person name="Hsu M.-H."/>
            <person name="Cui P."/>
            <person name="Hu S."/>
            <person name="Yu J."/>
            <person name="Chiu C.-H."/>
        </authorList>
    </citation>
    <scope>NUCLEOTIDE SEQUENCE [LARGE SCALE GENOMIC DNA]</scope>
    <source>
        <strain>CGSP14</strain>
    </source>
</reference>
<name>RL32_STRPS</name>